<name>MURB_ANAD2</name>
<sequence>MTWRDEIARRVRGEHLRDAPLAPRTAVRVGGPADLLCRPADGDALSALLRAVRELGVPLSVLGGGANTLVADAGVRGVVLRLPQEFPGESTDGDTLVLSAGAPISRLPARAHAHGLVGMEFLGGIPGTLGGAAAMNAGTRLGEMKDVVTRLELATPDGTGFVPASALGYAYRTCRLPPGAVIARVEVRLHPGDVAASEALMREDRERRRATQPLYRPTFGSTFTNPPGEYAGRLVEAVGLKGHRVGNAIWSPVHANFVTNLGGATARDVLALVRLARARVQERFGIALETEVRLLGEFLEEDLEGLDGHAAAGGGPGAASGGVRPPEAT</sequence>
<reference key="1">
    <citation type="submission" date="2009-01" db="EMBL/GenBank/DDBJ databases">
        <title>Complete sequence of Anaeromyxobacter dehalogenans 2CP-1.</title>
        <authorList>
            <person name="Lucas S."/>
            <person name="Copeland A."/>
            <person name="Lapidus A."/>
            <person name="Glavina del Rio T."/>
            <person name="Dalin E."/>
            <person name="Tice H."/>
            <person name="Bruce D."/>
            <person name="Goodwin L."/>
            <person name="Pitluck S."/>
            <person name="Saunders E."/>
            <person name="Brettin T."/>
            <person name="Detter J.C."/>
            <person name="Han C."/>
            <person name="Larimer F."/>
            <person name="Land M."/>
            <person name="Hauser L."/>
            <person name="Kyrpides N."/>
            <person name="Ovchinnikova G."/>
            <person name="Beliaev A.S."/>
            <person name="Richardson P."/>
        </authorList>
    </citation>
    <scope>NUCLEOTIDE SEQUENCE [LARGE SCALE GENOMIC DNA]</scope>
    <source>
        <strain>2CP-1 / ATCC BAA-258</strain>
    </source>
</reference>
<organism>
    <name type="scientific">Anaeromyxobacter dehalogenans (strain 2CP-1 / ATCC BAA-258)</name>
    <dbReference type="NCBI Taxonomy" id="455488"/>
    <lineage>
        <taxon>Bacteria</taxon>
        <taxon>Pseudomonadati</taxon>
        <taxon>Myxococcota</taxon>
        <taxon>Myxococcia</taxon>
        <taxon>Myxococcales</taxon>
        <taxon>Cystobacterineae</taxon>
        <taxon>Anaeromyxobacteraceae</taxon>
        <taxon>Anaeromyxobacter</taxon>
    </lineage>
</organism>
<dbReference type="EC" id="1.3.1.98" evidence="1"/>
<dbReference type="EMBL" id="CP001359">
    <property type="protein sequence ID" value="ACL67236.1"/>
    <property type="molecule type" value="Genomic_DNA"/>
</dbReference>
<dbReference type="RefSeq" id="WP_015934967.1">
    <property type="nucleotide sequence ID" value="NC_011891.1"/>
</dbReference>
<dbReference type="SMR" id="B8J8F0"/>
<dbReference type="KEGG" id="acp:A2cp1_3913"/>
<dbReference type="HOGENOM" id="CLU_035304_1_1_7"/>
<dbReference type="UniPathway" id="UPA00219"/>
<dbReference type="Proteomes" id="UP000007089">
    <property type="component" value="Chromosome"/>
</dbReference>
<dbReference type="GO" id="GO:0005829">
    <property type="term" value="C:cytosol"/>
    <property type="evidence" value="ECO:0007669"/>
    <property type="project" value="TreeGrafter"/>
</dbReference>
<dbReference type="GO" id="GO:0071949">
    <property type="term" value="F:FAD binding"/>
    <property type="evidence" value="ECO:0007669"/>
    <property type="project" value="InterPro"/>
</dbReference>
<dbReference type="GO" id="GO:0008762">
    <property type="term" value="F:UDP-N-acetylmuramate dehydrogenase activity"/>
    <property type="evidence" value="ECO:0007669"/>
    <property type="project" value="UniProtKB-UniRule"/>
</dbReference>
<dbReference type="GO" id="GO:0051301">
    <property type="term" value="P:cell division"/>
    <property type="evidence" value="ECO:0007669"/>
    <property type="project" value="UniProtKB-KW"/>
</dbReference>
<dbReference type="GO" id="GO:0071555">
    <property type="term" value="P:cell wall organization"/>
    <property type="evidence" value="ECO:0007669"/>
    <property type="project" value="UniProtKB-KW"/>
</dbReference>
<dbReference type="GO" id="GO:0009252">
    <property type="term" value="P:peptidoglycan biosynthetic process"/>
    <property type="evidence" value="ECO:0007669"/>
    <property type="project" value="UniProtKB-UniRule"/>
</dbReference>
<dbReference type="GO" id="GO:0008360">
    <property type="term" value="P:regulation of cell shape"/>
    <property type="evidence" value="ECO:0007669"/>
    <property type="project" value="UniProtKB-KW"/>
</dbReference>
<dbReference type="Gene3D" id="3.30.465.10">
    <property type="match status" value="1"/>
</dbReference>
<dbReference type="Gene3D" id="3.90.78.10">
    <property type="entry name" value="UDP-N-acetylenolpyruvoylglucosamine reductase, C-terminal domain"/>
    <property type="match status" value="1"/>
</dbReference>
<dbReference type="Gene3D" id="3.30.43.10">
    <property type="entry name" value="Uridine Diphospho-n-acetylenolpyruvylglucosamine Reductase, domain 2"/>
    <property type="match status" value="1"/>
</dbReference>
<dbReference type="HAMAP" id="MF_00037">
    <property type="entry name" value="MurB"/>
    <property type="match status" value="1"/>
</dbReference>
<dbReference type="InterPro" id="IPR016166">
    <property type="entry name" value="FAD-bd_PCMH"/>
</dbReference>
<dbReference type="InterPro" id="IPR036318">
    <property type="entry name" value="FAD-bd_PCMH-like_sf"/>
</dbReference>
<dbReference type="InterPro" id="IPR016167">
    <property type="entry name" value="FAD-bd_PCMH_sub1"/>
</dbReference>
<dbReference type="InterPro" id="IPR016169">
    <property type="entry name" value="FAD-bd_PCMH_sub2"/>
</dbReference>
<dbReference type="InterPro" id="IPR003170">
    <property type="entry name" value="MurB"/>
</dbReference>
<dbReference type="InterPro" id="IPR011601">
    <property type="entry name" value="MurB_C"/>
</dbReference>
<dbReference type="InterPro" id="IPR036635">
    <property type="entry name" value="MurB_C_sf"/>
</dbReference>
<dbReference type="InterPro" id="IPR006094">
    <property type="entry name" value="Oxid_FAD_bind_N"/>
</dbReference>
<dbReference type="NCBIfam" id="TIGR00179">
    <property type="entry name" value="murB"/>
    <property type="match status" value="1"/>
</dbReference>
<dbReference type="NCBIfam" id="NF010480">
    <property type="entry name" value="PRK13905.1"/>
    <property type="match status" value="1"/>
</dbReference>
<dbReference type="PANTHER" id="PTHR21071">
    <property type="entry name" value="UDP-N-ACETYLENOLPYRUVOYLGLUCOSAMINE REDUCTASE"/>
    <property type="match status" value="1"/>
</dbReference>
<dbReference type="PANTHER" id="PTHR21071:SF4">
    <property type="entry name" value="UDP-N-ACETYLENOLPYRUVOYLGLUCOSAMINE REDUCTASE"/>
    <property type="match status" value="1"/>
</dbReference>
<dbReference type="Pfam" id="PF01565">
    <property type="entry name" value="FAD_binding_4"/>
    <property type="match status" value="1"/>
</dbReference>
<dbReference type="Pfam" id="PF02873">
    <property type="entry name" value="MurB_C"/>
    <property type="match status" value="1"/>
</dbReference>
<dbReference type="SUPFAM" id="SSF56176">
    <property type="entry name" value="FAD-binding/transporter-associated domain-like"/>
    <property type="match status" value="1"/>
</dbReference>
<dbReference type="SUPFAM" id="SSF56194">
    <property type="entry name" value="Uridine diphospho-N-Acetylenolpyruvylglucosamine reductase, MurB, C-terminal domain"/>
    <property type="match status" value="1"/>
</dbReference>
<dbReference type="PROSITE" id="PS51387">
    <property type="entry name" value="FAD_PCMH"/>
    <property type="match status" value="1"/>
</dbReference>
<gene>
    <name evidence="1" type="primary">murB</name>
    <name type="ordered locus">A2cp1_3913</name>
</gene>
<proteinExistence type="inferred from homology"/>
<feature type="chain" id="PRO_1000191395" description="UDP-N-acetylenolpyruvoylglucosamine reductase">
    <location>
        <begin position="1"/>
        <end position="329"/>
    </location>
</feature>
<feature type="domain" description="FAD-binding PCMH-type" evidence="1">
    <location>
        <begin position="28"/>
        <end position="192"/>
    </location>
</feature>
<feature type="region of interest" description="Disordered" evidence="2">
    <location>
        <begin position="307"/>
        <end position="329"/>
    </location>
</feature>
<feature type="compositionally biased region" description="Gly residues" evidence="2">
    <location>
        <begin position="311"/>
        <end position="320"/>
    </location>
</feature>
<feature type="active site" evidence="1">
    <location>
        <position position="172"/>
    </location>
</feature>
<feature type="active site" description="Proton donor" evidence="1">
    <location>
        <position position="221"/>
    </location>
</feature>
<feature type="active site" evidence="1">
    <location>
        <position position="291"/>
    </location>
</feature>
<comment type="function">
    <text evidence="1">Cell wall formation.</text>
</comment>
<comment type="catalytic activity">
    <reaction evidence="1">
        <text>UDP-N-acetyl-alpha-D-muramate + NADP(+) = UDP-N-acetyl-3-O-(1-carboxyvinyl)-alpha-D-glucosamine + NADPH + H(+)</text>
        <dbReference type="Rhea" id="RHEA:12248"/>
        <dbReference type="ChEBI" id="CHEBI:15378"/>
        <dbReference type="ChEBI" id="CHEBI:57783"/>
        <dbReference type="ChEBI" id="CHEBI:58349"/>
        <dbReference type="ChEBI" id="CHEBI:68483"/>
        <dbReference type="ChEBI" id="CHEBI:70757"/>
        <dbReference type="EC" id="1.3.1.98"/>
    </reaction>
</comment>
<comment type="cofactor">
    <cofactor evidence="1">
        <name>FAD</name>
        <dbReference type="ChEBI" id="CHEBI:57692"/>
    </cofactor>
</comment>
<comment type="pathway">
    <text evidence="1">Cell wall biogenesis; peptidoglycan biosynthesis.</text>
</comment>
<comment type="subcellular location">
    <subcellularLocation>
        <location evidence="1">Cytoplasm</location>
    </subcellularLocation>
</comment>
<comment type="similarity">
    <text evidence="1">Belongs to the MurB family.</text>
</comment>
<keyword id="KW-0131">Cell cycle</keyword>
<keyword id="KW-0132">Cell division</keyword>
<keyword id="KW-0133">Cell shape</keyword>
<keyword id="KW-0961">Cell wall biogenesis/degradation</keyword>
<keyword id="KW-0963">Cytoplasm</keyword>
<keyword id="KW-0274">FAD</keyword>
<keyword id="KW-0285">Flavoprotein</keyword>
<keyword id="KW-0521">NADP</keyword>
<keyword id="KW-0560">Oxidoreductase</keyword>
<keyword id="KW-0573">Peptidoglycan synthesis</keyword>
<evidence type="ECO:0000255" key="1">
    <source>
        <dbReference type="HAMAP-Rule" id="MF_00037"/>
    </source>
</evidence>
<evidence type="ECO:0000256" key="2">
    <source>
        <dbReference type="SAM" id="MobiDB-lite"/>
    </source>
</evidence>
<protein>
    <recommendedName>
        <fullName evidence="1">UDP-N-acetylenolpyruvoylglucosamine reductase</fullName>
        <ecNumber evidence="1">1.3.1.98</ecNumber>
    </recommendedName>
    <alternativeName>
        <fullName evidence="1">UDP-N-acetylmuramate dehydrogenase</fullName>
    </alternativeName>
</protein>
<accession>B8J8F0</accession>